<reference key="1">
    <citation type="journal article" date="2006" name="BMC Evol. Biol.">
        <title>Complete plastid genome sequences of Drimys, Liriodendron, and Piper: implications for the phylogenetic relationships of magnoliids.</title>
        <authorList>
            <person name="Cai Z."/>
            <person name="Penaflor C."/>
            <person name="Kuehl J.V."/>
            <person name="Leebens-Mack J."/>
            <person name="Carlson J.E."/>
            <person name="dePamphilis C.W."/>
            <person name="Boore J.L."/>
            <person name="Jansen R.K."/>
        </authorList>
    </citation>
    <scope>NUCLEOTIDE SEQUENCE [LARGE SCALE GENOMIC DNA]</scope>
</reference>
<dbReference type="EMBL" id="DQ887676">
    <property type="protein sequence ID" value="ABH88303.1"/>
    <property type="molecule type" value="Genomic_DNA"/>
</dbReference>
<dbReference type="RefSeq" id="YP_784392.1">
    <property type="nucleotide sequence ID" value="NC_008456.1"/>
</dbReference>
<dbReference type="SMR" id="Q06GZ1"/>
<dbReference type="GeneID" id="4363568"/>
<dbReference type="GO" id="GO:0009535">
    <property type="term" value="C:chloroplast thylakoid membrane"/>
    <property type="evidence" value="ECO:0007669"/>
    <property type="project" value="UniProtKB-SubCell"/>
</dbReference>
<dbReference type="GO" id="GO:0045259">
    <property type="term" value="C:proton-transporting ATP synthase complex"/>
    <property type="evidence" value="ECO:0007669"/>
    <property type="project" value="UniProtKB-KW"/>
</dbReference>
<dbReference type="GO" id="GO:0005524">
    <property type="term" value="F:ATP binding"/>
    <property type="evidence" value="ECO:0007669"/>
    <property type="project" value="UniProtKB-UniRule"/>
</dbReference>
<dbReference type="GO" id="GO:0046933">
    <property type="term" value="F:proton-transporting ATP synthase activity, rotational mechanism"/>
    <property type="evidence" value="ECO:0007669"/>
    <property type="project" value="UniProtKB-UniRule"/>
</dbReference>
<dbReference type="CDD" id="cd12152">
    <property type="entry name" value="F1-ATPase_delta"/>
    <property type="match status" value="1"/>
</dbReference>
<dbReference type="FunFam" id="2.60.15.10:FF:000002">
    <property type="entry name" value="ATP synthase epsilon chain, chloroplastic"/>
    <property type="match status" value="1"/>
</dbReference>
<dbReference type="Gene3D" id="6.10.140.480">
    <property type="match status" value="1"/>
</dbReference>
<dbReference type="Gene3D" id="2.60.15.10">
    <property type="entry name" value="F0F1 ATP synthase delta/epsilon subunit, N-terminal"/>
    <property type="match status" value="1"/>
</dbReference>
<dbReference type="HAMAP" id="MF_00530">
    <property type="entry name" value="ATP_synth_epsil_bac"/>
    <property type="match status" value="1"/>
</dbReference>
<dbReference type="InterPro" id="IPR001469">
    <property type="entry name" value="ATP_synth_F1_dsu/esu"/>
</dbReference>
<dbReference type="InterPro" id="IPR020546">
    <property type="entry name" value="ATP_synth_F1_dsu/esu_N"/>
</dbReference>
<dbReference type="InterPro" id="IPR020547">
    <property type="entry name" value="ATP_synth_F1_esu_C"/>
</dbReference>
<dbReference type="InterPro" id="IPR036771">
    <property type="entry name" value="ATPsynth_dsu/esu_N"/>
</dbReference>
<dbReference type="NCBIfam" id="TIGR01216">
    <property type="entry name" value="ATP_synt_epsi"/>
    <property type="match status" value="1"/>
</dbReference>
<dbReference type="PANTHER" id="PTHR13822">
    <property type="entry name" value="ATP SYNTHASE DELTA/EPSILON CHAIN"/>
    <property type="match status" value="1"/>
</dbReference>
<dbReference type="PANTHER" id="PTHR13822:SF10">
    <property type="entry name" value="ATP SYNTHASE EPSILON CHAIN, CHLOROPLASTIC"/>
    <property type="match status" value="1"/>
</dbReference>
<dbReference type="Pfam" id="PF00401">
    <property type="entry name" value="ATP-synt_DE"/>
    <property type="match status" value="1"/>
</dbReference>
<dbReference type="Pfam" id="PF02823">
    <property type="entry name" value="ATP-synt_DE_N"/>
    <property type="match status" value="1"/>
</dbReference>
<dbReference type="SUPFAM" id="SSF51344">
    <property type="entry name" value="Epsilon subunit of F1F0-ATP synthase N-terminal domain"/>
    <property type="match status" value="1"/>
</dbReference>
<protein>
    <recommendedName>
        <fullName evidence="1">ATP synthase epsilon chain, chloroplastic</fullName>
    </recommendedName>
    <alternativeName>
        <fullName evidence="1">ATP synthase F1 sector epsilon subunit</fullName>
    </alternativeName>
    <alternativeName>
        <fullName evidence="1">F-ATPase epsilon subunit</fullName>
    </alternativeName>
</protein>
<geneLocation type="chloroplast"/>
<gene>
    <name evidence="1" type="primary">atpE</name>
</gene>
<name>ATPE_DRIGR</name>
<sequence>MTLNLCVLTPNRIIWDSEVKEIILSTNSGQIGVLPNHAPIATAVDIGILRIRLNDQWLTMALMGGFARIGNNEITILVNDAERGSDIDPQEAQRTLEIAEASLSRAEGKRQEIEANLALRRARTRVEAINVISY</sequence>
<comment type="function">
    <text evidence="1">Produces ATP from ADP in the presence of a proton gradient across the membrane.</text>
</comment>
<comment type="subunit">
    <text evidence="1">F-type ATPases have 2 components, CF(1) - the catalytic core - and CF(0) - the membrane proton channel. CF(1) has five subunits: alpha(3), beta(3), gamma(1), delta(1), epsilon(1). CF(0) has three main subunits: a, b and c.</text>
</comment>
<comment type="subcellular location">
    <subcellularLocation>
        <location evidence="1">Plastid</location>
        <location evidence="1">Chloroplast thylakoid membrane</location>
        <topology evidence="1">Peripheral membrane protein</topology>
    </subcellularLocation>
</comment>
<comment type="similarity">
    <text evidence="1">Belongs to the ATPase epsilon chain family.</text>
</comment>
<accession>Q06GZ1</accession>
<keyword id="KW-0066">ATP synthesis</keyword>
<keyword id="KW-0139">CF(1)</keyword>
<keyword id="KW-0150">Chloroplast</keyword>
<keyword id="KW-0375">Hydrogen ion transport</keyword>
<keyword id="KW-0406">Ion transport</keyword>
<keyword id="KW-0472">Membrane</keyword>
<keyword id="KW-0934">Plastid</keyword>
<keyword id="KW-0793">Thylakoid</keyword>
<keyword id="KW-0813">Transport</keyword>
<feature type="chain" id="PRO_0000275197" description="ATP synthase epsilon chain, chloroplastic">
    <location>
        <begin position="1"/>
        <end position="134"/>
    </location>
</feature>
<evidence type="ECO:0000255" key="1">
    <source>
        <dbReference type="HAMAP-Rule" id="MF_00530"/>
    </source>
</evidence>
<proteinExistence type="inferred from homology"/>
<organism>
    <name type="scientific">Drimys granadensis</name>
    <dbReference type="NCBI Taxonomy" id="224735"/>
    <lineage>
        <taxon>Eukaryota</taxon>
        <taxon>Viridiplantae</taxon>
        <taxon>Streptophyta</taxon>
        <taxon>Embryophyta</taxon>
        <taxon>Tracheophyta</taxon>
        <taxon>Spermatophyta</taxon>
        <taxon>Magnoliopsida</taxon>
        <taxon>Magnoliidae</taxon>
        <taxon>Canellales</taxon>
        <taxon>Winteraceae</taxon>
        <taxon>Drimys</taxon>
    </lineage>
</organism>